<proteinExistence type="inferred from homology"/>
<dbReference type="EC" id="3.5.1.5" evidence="1"/>
<dbReference type="EMBL" id="U89957">
    <property type="protein sequence ID" value="AAC00059.1"/>
    <property type="molecule type" value="Genomic_DNA"/>
</dbReference>
<dbReference type="RefSeq" id="WP_005599002.1">
    <property type="nucleotide sequence ID" value="NZ_UIFY01000002.1"/>
</dbReference>
<dbReference type="SMR" id="O54419"/>
<dbReference type="GeneID" id="48599903"/>
<dbReference type="OrthoDB" id="9797217at2"/>
<dbReference type="UniPathway" id="UPA00258">
    <property type="reaction ID" value="UER00370"/>
</dbReference>
<dbReference type="GO" id="GO:0035550">
    <property type="term" value="C:urease complex"/>
    <property type="evidence" value="ECO:0007669"/>
    <property type="project" value="InterPro"/>
</dbReference>
<dbReference type="GO" id="GO:0009039">
    <property type="term" value="F:urease activity"/>
    <property type="evidence" value="ECO:0007669"/>
    <property type="project" value="UniProtKB-UniRule"/>
</dbReference>
<dbReference type="GO" id="GO:0043419">
    <property type="term" value="P:urea catabolic process"/>
    <property type="evidence" value="ECO:0007669"/>
    <property type="project" value="UniProtKB-UniRule"/>
</dbReference>
<dbReference type="CDD" id="cd00407">
    <property type="entry name" value="Urease_beta"/>
    <property type="match status" value="1"/>
</dbReference>
<dbReference type="FunFam" id="2.10.150.10:FF:000001">
    <property type="entry name" value="Urease subunit beta"/>
    <property type="match status" value="1"/>
</dbReference>
<dbReference type="Gene3D" id="2.10.150.10">
    <property type="entry name" value="Urease, beta subunit"/>
    <property type="match status" value="1"/>
</dbReference>
<dbReference type="HAMAP" id="MF_01954">
    <property type="entry name" value="Urease_beta"/>
    <property type="match status" value="1"/>
</dbReference>
<dbReference type="InterPro" id="IPR002019">
    <property type="entry name" value="Urease_beta-like"/>
</dbReference>
<dbReference type="InterPro" id="IPR036461">
    <property type="entry name" value="Urease_betasu_sf"/>
</dbReference>
<dbReference type="InterPro" id="IPR050069">
    <property type="entry name" value="Urease_subunit"/>
</dbReference>
<dbReference type="NCBIfam" id="NF009682">
    <property type="entry name" value="PRK13203.1"/>
    <property type="match status" value="1"/>
</dbReference>
<dbReference type="NCBIfam" id="TIGR00192">
    <property type="entry name" value="urease_beta"/>
    <property type="match status" value="1"/>
</dbReference>
<dbReference type="PANTHER" id="PTHR33569">
    <property type="entry name" value="UREASE"/>
    <property type="match status" value="1"/>
</dbReference>
<dbReference type="PANTHER" id="PTHR33569:SF1">
    <property type="entry name" value="UREASE"/>
    <property type="match status" value="1"/>
</dbReference>
<dbReference type="Pfam" id="PF00699">
    <property type="entry name" value="Urease_beta"/>
    <property type="match status" value="1"/>
</dbReference>
<dbReference type="SUPFAM" id="SSF51278">
    <property type="entry name" value="Urease, beta-subunit"/>
    <property type="match status" value="1"/>
</dbReference>
<feature type="chain" id="PRO_0000067568" description="Urease subunit beta">
    <location>
        <begin position="1"/>
        <end position="101"/>
    </location>
</feature>
<reference key="1">
    <citation type="journal article" date="1997" name="Infect. Immun.">
        <title>Genetic and biochemical analyses of Actinobacillus pleuropneumoniae urease.</title>
        <authorList>
            <person name="Bosse J.T."/>
            <person name="Macinnes J.I."/>
        </authorList>
    </citation>
    <scope>NUCLEOTIDE SEQUENCE [GENOMIC DNA]</scope>
    <source>
        <strain>CM5 / Serotype 1</strain>
    </source>
</reference>
<comment type="catalytic activity">
    <reaction evidence="1">
        <text>urea + 2 H2O + H(+) = hydrogencarbonate + 2 NH4(+)</text>
        <dbReference type="Rhea" id="RHEA:20557"/>
        <dbReference type="ChEBI" id="CHEBI:15377"/>
        <dbReference type="ChEBI" id="CHEBI:15378"/>
        <dbReference type="ChEBI" id="CHEBI:16199"/>
        <dbReference type="ChEBI" id="CHEBI:17544"/>
        <dbReference type="ChEBI" id="CHEBI:28938"/>
        <dbReference type="EC" id="3.5.1.5"/>
    </reaction>
</comment>
<comment type="pathway">
    <text evidence="1">Nitrogen metabolism; urea degradation; CO(2) and NH(3) from urea (urease route): step 1/1.</text>
</comment>
<comment type="subunit">
    <text evidence="1">Heterotrimer of UreA (gamma), UreB (beta) and UreC (alpha) subunits. Three heterotrimers associate to form the active enzyme.</text>
</comment>
<comment type="subcellular location">
    <subcellularLocation>
        <location evidence="1">Cytoplasm</location>
    </subcellularLocation>
</comment>
<comment type="similarity">
    <text evidence="1">Belongs to the urease beta subunit family.</text>
</comment>
<sequence>MIPGEYQLADGDVQANVGRKTVKLEVVNSGDRPIQVGSHYHFFETNHALKFDRLQARGMRLNVPSGNAVRFEPGEAKEVELVEFGGNKVIYGFHNEIDGKL</sequence>
<organism>
    <name type="scientific">Actinobacillus pleuropneumoniae</name>
    <name type="common">Haemophilus pleuropneumoniae</name>
    <dbReference type="NCBI Taxonomy" id="715"/>
    <lineage>
        <taxon>Bacteria</taxon>
        <taxon>Pseudomonadati</taxon>
        <taxon>Pseudomonadota</taxon>
        <taxon>Gammaproteobacteria</taxon>
        <taxon>Pasteurellales</taxon>
        <taxon>Pasteurellaceae</taxon>
        <taxon>Actinobacillus</taxon>
    </lineage>
</organism>
<protein>
    <recommendedName>
        <fullName evidence="1">Urease subunit beta</fullName>
        <ecNumber evidence="1">3.5.1.5</ecNumber>
    </recommendedName>
    <alternativeName>
        <fullName evidence="1">Urea amidohydrolase subunit beta</fullName>
    </alternativeName>
</protein>
<keyword id="KW-0963">Cytoplasm</keyword>
<keyword id="KW-0378">Hydrolase</keyword>
<gene>
    <name evidence="1" type="primary">ureB</name>
</gene>
<evidence type="ECO:0000255" key="1">
    <source>
        <dbReference type="HAMAP-Rule" id="MF_01954"/>
    </source>
</evidence>
<name>URE2_ACTPL</name>
<accession>O54419</accession>